<proteinExistence type="inferred from homology"/>
<sequence length="264" mass="28431">MKNYSSLLIGGKKFSSRLMVGTGKYKSTQDMIESLSNSETEIITVAVRRIKNDETGENLLEKINWKKYWMLPNTAGCVNSDEAVRIAILGRELAKLSGQEENNFVKLEVIPDKKYLLPDPMETLKAAEILIKKGFSVLPYINADPILAKRLEEIGCATVMPLGSPIGSGQGLLNLSNIGIIIESAKVPVIIDAGIGVPSEASQAMELGADGVLINSAIAQAENPPLMAQAINYGVKAGRQAFLAGRIKKQDFATASSPEKNISI</sequence>
<feature type="chain" id="PRO_1000060252" description="Thiazole synthase">
    <location>
        <begin position="1"/>
        <end position="264"/>
    </location>
</feature>
<feature type="active site" description="Schiff-base intermediate with DXP" evidence="1">
    <location>
        <position position="106"/>
    </location>
</feature>
<feature type="binding site" evidence="1">
    <location>
        <position position="167"/>
    </location>
    <ligand>
        <name>1-deoxy-D-xylulose 5-phosphate</name>
        <dbReference type="ChEBI" id="CHEBI:57792"/>
    </ligand>
</feature>
<feature type="binding site" evidence="1">
    <location>
        <begin position="193"/>
        <end position="194"/>
    </location>
    <ligand>
        <name>1-deoxy-D-xylulose 5-phosphate</name>
        <dbReference type="ChEBI" id="CHEBI:57792"/>
    </ligand>
</feature>
<feature type="binding site" evidence="1">
    <location>
        <begin position="215"/>
        <end position="216"/>
    </location>
    <ligand>
        <name>1-deoxy-D-xylulose 5-phosphate</name>
        <dbReference type="ChEBI" id="CHEBI:57792"/>
    </ligand>
</feature>
<accession>A8G7G9</accession>
<reference key="1">
    <citation type="journal article" date="2007" name="PLoS Genet.">
        <title>Patterns and implications of gene gain and loss in the evolution of Prochlorococcus.</title>
        <authorList>
            <person name="Kettler G.C."/>
            <person name="Martiny A.C."/>
            <person name="Huang K."/>
            <person name="Zucker J."/>
            <person name="Coleman M.L."/>
            <person name="Rodrigue S."/>
            <person name="Chen F."/>
            <person name="Lapidus A."/>
            <person name="Ferriera S."/>
            <person name="Johnson J."/>
            <person name="Steglich C."/>
            <person name="Church G.M."/>
            <person name="Richardson P."/>
            <person name="Chisholm S.W."/>
        </authorList>
    </citation>
    <scope>NUCLEOTIDE SEQUENCE [LARGE SCALE GENOMIC DNA]</scope>
    <source>
        <strain>MIT 9215</strain>
    </source>
</reference>
<keyword id="KW-0963">Cytoplasm</keyword>
<keyword id="KW-0704">Schiff base</keyword>
<keyword id="KW-0784">Thiamine biosynthesis</keyword>
<keyword id="KW-0808">Transferase</keyword>
<evidence type="ECO:0000255" key="1">
    <source>
        <dbReference type="HAMAP-Rule" id="MF_00443"/>
    </source>
</evidence>
<dbReference type="EC" id="2.8.1.10" evidence="1"/>
<dbReference type="EMBL" id="CP000825">
    <property type="protein sequence ID" value="ABV51550.1"/>
    <property type="molecule type" value="Genomic_DNA"/>
</dbReference>
<dbReference type="RefSeq" id="WP_012008538.1">
    <property type="nucleotide sequence ID" value="NC_009840.1"/>
</dbReference>
<dbReference type="SMR" id="A8G7G9"/>
<dbReference type="STRING" id="93060.P9215_19371"/>
<dbReference type="KEGG" id="pmh:P9215_19371"/>
<dbReference type="eggNOG" id="COG2022">
    <property type="taxonomic scope" value="Bacteria"/>
</dbReference>
<dbReference type="HOGENOM" id="CLU_062233_1_0_3"/>
<dbReference type="OrthoDB" id="9805935at2"/>
<dbReference type="UniPathway" id="UPA00060"/>
<dbReference type="Proteomes" id="UP000002014">
    <property type="component" value="Chromosome"/>
</dbReference>
<dbReference type="GO" id="GO:0005737">
    <property type="term" value="C:cytoplasm"/>
    <property type="evidence" value="ECO:0007669"/>
    <property type="project" value="UniProtKB-SubCell"/>
</dbReference>
<dbReference type="GO" id="GO:1990107">
    <property type="term" value="F:thiazole synthase activity"/>
    <property type="evidence" value="ECO:0007669"/>
    <property type="project" value="UniProtKB-EC"/>
</dbReference>
<dbReference type="GO" id="GO:0009229">
    <property type="term" value="P:thiamine diphosphate biosynthetic process"/>
    <property type="evidence" value="ECO:0007669"/>
    <property type="project" value="UniProtKB-UniRule"/>
</dbReference>
<dbReference type="CDD" id="cd04728">
    <property type="entry name" value="ThiG"/>
    <property type="match status" value="1"/>
</dbReference>
<dbReference type="Gene3D" id="3.20.20.70">
    <property type="entry name" value="Aldolase class I"/>
    <property type="match status" value="1"/>
</dbReference>
<dbReference type="HAMAP" id="MF_00443">
    <property type="entry name" value="ThiG"/>
    <property type="match status" value="1"/>
</dbReference>
<dbReference type="InterPro" id="IPR013785">
    <property type="entry name" value="Aldolase_TIM"/>
</dbReference>
<dbReference type="InterPro" id="IPR033983">
    <property type="entry name" value="Thiazole_synthase_ThiG"/>
</dbReference>
<dbReference type="InterPro" id="IPR008867">
    <property type="entry name" value="ThiG"/>
</dbReference>
<dbReference type="PANTHER" id="PTHR34266">
    <property type="entry name" value="THIAZOLE SYNTHASE"/>
    <property type="match status" value="1"/>
</dbReference>
<dbReference type="PANTHER" id="PTHR34266:SF2">
    <property type="entry name" value="THIAZOLE SYNTHASE"/>
    <property type="match status" value="1"/>
</dbReference>
<dbReference type="Pfam" id="PF05690">
    <property type="entry name" value="ThiG"/>
    <property type="match status" value="1"/>
</dbReference>
<dbReference type="SUPFAM" id="SSF110399">
    <property type="entry name" value="ThiG-like"/>
    <property type="match status" value="1"/>
</dbReference>
<protein>
    <recommendedName>
        <fullName evidence="1">Thiazole synthase</fullName>
        <ecNumber evidence="1">2.8.1.10</ecNumber>
    </recommendedName>
</protein>
<comment type="function">
    <text evidence="1">Catalyzes the rearrangement of 1-deoxy-D-xylulose 5-phosphate (DXP) to produce the thiazole phosphate moiety of thiamine. Sulfur is provided by the thiocarboxylate moiety of the carrier protein ThiS. In vitro, sulfur can be provided by H(2)S.</text>
</comment>
<comment type="catalytic activity">
    <reaction evidence="1">
        <text>[ThiS sulfur-carrier protein]-C-terminal-Gly-aminoethanethioate + 2-iminoacetate + 1-deoxy-D-xylulose 5-phosphate = [ThiS sulfur-carrier protein]-C-terminal Gly-Gly + 2-[(2R,5Z)-2-carboxy-4-methylthiazol-5(2H)-ylidene]ethyl phosphate + 2 H2O + H(+)</text>
        <dbReference type="Rhea" id="RHEA:26297"/>
        <dbReference type="Rhea" id="RHEA-COMP:12909"/>
        <dbReference type="Rhea" id="RHEA-COMP:19908"/>
        <dbReference type="ChEBI" id="CHEBI:15377"/>
        <dbReference type="ChEBI" id="CHEBI:15378"/>
        <dbReference type="ChEBI" id="CHEBI:57792"/>
        <dbReference type="ChEBI" id="CHEBI:62899"/>
        <dbReference type="ChEBI" id="CHEBI:77846"/>
        <dbReference type="ChEBI" id="CHEBI:90778"/>
        <dbReference type="ChEBI" id="CHEBI:232372"/>
        <dbReference type="EC" id="2.8.1.10"/>
    </reaction>
</comment>
<comment type="pathway">
    <text evidence="1">Cofactor biosynthesis; thiamine diphosphate biosynthesis.</text>
</comment>
<comment type="subunit">
    <text evidence="1">Homotetramer. Forms heterodimers with either ThiH or ThiS.</text>
</comment>
<comment type="subcellular location">
    <subcellularLocation>
        <location evidence="1">Cytoplasm</location>
    </subcellularLocation>
</comment>
<comment type="similarity">
    <text evidence="1">Belongs to the ThiG family.</text>
</comment>
<gene>
    <name evidence="1" type="primary">thiG</name>
    <name type="ordered locus">P9215_19371</name>
</gene>
<organism>
    <name type="scientific">Prochlorococcus marinus (strain MIT 9215)</name>
    <dbReference type="NCBI Taxonomy" id="93060"/>
    <lineage>
        <taxon>Bacteria</taxon>
        <taxon>Bacillati</taxon>
        <taxon>Cyanobacteriota</taxon>
        <taxon>Cyanophyceae</taxon>
        <taxon>Synechococcales</taxon>
        <taxon>Prochlorococcaceae</taxon>
        <taxon>Prochlorococcus</taxon>
    </lineage>
</organism>
<name>THIG_PROM2</name>